<reference key="1">
    <citation type="journal article" date="1995" name="Science">
        <title>Whole-genome random sequencing and assembly of Haemophilus influenzae Rd.</title>
        <authorList>
            <person name="Fleischmann R.D."/>
            <person name="Adams M.D."/>
            <person name="White O."/>
            <person name="Clayton R.A."/>
            <person name="Kirkness E.F."/>
            <person name="Kerlavage A.R."/>
            <person name="Bult C.J."/>
            <person name="Tomb J.-F."/>
            <person name="Dougherty B.A."/>
            <person name="Merrick J.M."/>
            <person name="McKenney K."/>
            <person name="Sutton G.G."/>
            <person name="FitzHugh W."/>
            <person name="Fields C.A."/>
            <person name="Gocayne J.D."/>
            <person name="Scott J.D."/>
            <person name="Shirley R."/>
            <person name="Liu L.-I."/>
            <person name="Glodek A."/>
            <person name="Kelley J.M."/>
            <person name="Weidman J.F."/>
            <person name="Phillips C.A."/>
            <person name="Spriggs T."/>
            <person name="Hedblom E."/>
            <person name="Cotton M.D."/>
            <person name="Utterback T.R."/>
            <person name="Hanna M.C."/>
            <person name="Nguyen D.T."/>
            <person name="Saudek D.M."/>
            <person name="Brandon R.C."/>
            <person name="Fine L.D."/>
            <person name="Fritchman J.L."/>
            <person name="Fuhrmann J.L."/>
            <person name="Geoghagen N.S.M."/>
            <person name="Gnehm C.L."/>
            <person name="McDonald L.A."/>
            <person name="Small K.V."/>
            <person name="Fraser C.M."/>
            <person name="Smith H.O."/>
            <person name="Venter J.C."/>
        </authorList>
    </citation>
    <scope>NUCLEOTIDE SEQUENCE [LARGE SCALE GENOMIC DNA]</scope>
    <source>
        <strain>ATCC 51907 / DSM 11121 / KW20 / Rd</strain>
    </source>
</reference>
<accession>P44650</accession>
<protein>
    <recommendedName>
        <fullName evidence="1">Ferredoxin-type protein NapF</fullName>
    </recommendedName>
</protein>
<comment type="function">
    <text evidence="1">Could be involved in the maturation of NapA, the catalytic subunit of the periplasmic nitrate reductase, before its export into the periplasm.</text>
</comment>
<comment type="cofactor">
    <cofactor evidence="1">
        <name>[4Fe-4S] cluster</name>
        <dbReference type="ChEBI" id="CHEBI:49883"/>
    </cofactor>
    <text evidence="2">Binds 4 [4Fe-4S] clusters or perhaps rather 3 [4Fe-4S] clusters and 1 3Fe-4S cluster, leaving Cys-113 out of the cluster ligands.</text>
</comment>
<comment type="subunit">
    <text evidence="1">Interacts with the cytoplasmic NapA precursor.</text>
</comment>
<comment type="subcellular location">
    <subcellularLocation>
        <location evidence="1">Cytoplasm</location>
    </subcellularLocation>
</comment>
<comment type="similarity">
    <text evidence="1">Belongs to the NapF family.</text>
</comment>
<comment type="sequence caution" evidence="2">
    <conflict type="frameshift">
        <sequence resource="EMBL-CDS" id="AAC22004"/>
    </conflict>
</comment>
<name>NAPF_HAEIN</name>
<gene>
    <name evidence="1" type="primary">napF</name>
    <name type="ordered locus">HI_0342</name>
</gene>
<keyword id="KW-0004">4Fe-4S</keyword>
<keyword id="KW-0963">Cytoplasm</keyword>
<keyword id="KW-0408">Iron</keyword>
<keyword id="KW-0411">Iron-sulfur</keyword>
<keyword id="KW-0479">Metal-binding</keyword>
<keyword id="KW-1185">Reference proteome</keyword>
<keyword id="KW-0677">Repeat</keyword>
<feature type="chain" id="PRO_0000159278" description="Ferredoxin-type protein NapF">
    <location>
        <begin position="1"/>
        <end position="176"/>
    </location>
</feature>
<feature type="domain" description="4Fe-4S ferredoxin-type 1" evidence="1">
    <location>
        <begin position="39"/>
        <end position="68"/>
    </location>
</feature>
<feature type="domain" description="4Fe-4S ferredoxin-type 2" evidence="1">
    <location>
        <begin position="71"/>
        <end position="100"/>
    </location>
</feature>
<feature type="domain" description="4Fe-4S ferredoxin-type 3" evidence="1">
    <location>
        <begin position="119"/>
        <end position="138"/>
    </location>
</feature>
<feature type="domain" description="4Fe-4S ferredoxin-type 4" evidence="1">
    <location>
        <begin position="143"/>
        <end position="172"/>
    </location>
</feature>
<feature type="binding site" evidence="1">
    <location>
        <position position="48"/>
    </location>
    <ligand>
        <name>[4Fe-4S] cluster</name>
        <dbReference type="ChEBI" id="CHEBI:49883"/>
        <label>1</label>
    </ligand>
</feature>
<feature type="binding site" evidence="1">
    <location>
        <position position="51"/>
    </location>
    <ligand>
        <name>[4Fe-4S] cluster</name>
        <dbReference type="ChEBI" id="CHEBI:49883"/>
        <label>1</label>
    </ligand>
</feature>
<feature type="binding site" evidence="1">
    <location>
        <position position="54"/>
    </location>
    <ligand>
        <name>[4Fe-4S] cluster</name>
        <dbReference type="ChEBI" id="CHEBI:49883"/>
        <label>1</label>
    </ligand>
</feature>
<feature type="binding site" evidence="1">
    <location>
        <position position="58"/>
    </location>
    <ligand>
        <name>[4Fe-4S] cluster</name>
        <dbReference type="ChEBI" id="CHEBI:49883"/>
        <label>1</label>
    </ligand>
</feature>
<feature type="binding site" evidence="1">
    <location>
        <position position="80"/>
    </location>
    <ligand>
        <name>[4Fe-4S] cluster</name>
        <dbReference type="ChEBI" id="CHEBI:49883"/>
        <label>2</label>
    </ligand>
</feature>
<feature type="binding site" evidence="1">
    <location>
        <position position="83"/>
    </location>
    <ligand>
        <name>[4Fe-4S] cluster</name>
        <dbReference type="ChEBI" id="CHEBI:49883"/>
        <label>2</label>
    </ligand>
</feature>
<feature type="binding site" evidence="1">
    <location>
        <position position="86"/>
    </location>
    <ligand>
        <name>[4Fe-4S] cluster</name>
        <dbReference type="ChEBI" id="CHEBI:49883"/>
        <label>2</label>
    </ligand>
</feature>
<feature type="binding site" evidence="1">
    <location>
        <position position="90"/>
    </location>
    <ligand>
        <name>[4Fe-4S] cluster</name>
        <dbReference type="ChEBI" id="CHEBI:49883"/>
        <label>2</label>
    </ligand>
</feature>
<feature type="binding site" evidence="2">
    <location>
        <position position="113"/>
    </location>
    <ligand>
        <name>[4Fe-4S] cluster</name>
        <dbReference type="ChEBI" id="CHEBI:49883"/>
        <label>3</label>
    </ligand>
</feature>
<feature type="binding site" evidence="2">
    <location>
        <position position="121"/>
    </location>
    <ligand>
        <name>[4Fe-4S] cluster</name>
        <dbReference type="ChEBI" id="CHEBI:49883"/>
        <label>3</label>
    </ligand>
</feature>
<feature type="binding site" evidence="2">
    <location>
        <position position="124"/>
    </location>
    <ligand>
        <name>[4Fe-4S] cluster</name>
        <dbReference type="ChEBI" id="CHEBI:49883"/>
        <label>3</label>
    </ligand>
</feature>
<feature type="binding site" evidence="2">
    <location>
        <position position="128"/>
    </location>
    <ligand>
        <name>[4Fe-4S] cluster</name>
        <dbReference type="ChEBI" id="CHEBI:49883"/>
        <label>3</label>
    </ligand>
</feature>
<feature type="binding site" evidence="1">
    <location>
        <position position="152"/>
    </location>
    <ligand>
        <name>[4Fe-4S] cluster</name>
        <dbReference type="ChEBI" id="CHEBI:49883"/>
        <label>4</label>
    </ligand>
</feature>
<feature type="binding site" evidence="1">
    <location>
        <position position="155"/>
    </location>
    <ligand>
        <name>[4Fe-4S] cluster</name>
        <dbReference type="ChEBI" id="CHEBI:49883"/>
        <label>4</label>
    </ligand>
</feature>
<feature type="binding site" evidence="1">
    <location>
        <position position="158"/>
    </location>
    <ligand>
        <name>[4Fe-4S] cluster</name>
        <dbReference type="ChEBI" id="CHEBI:49883"/>
        <label>4</label>
    </ligand>
</feature>
<feature type="binding site" evidence="1">
    <location>
        <position position="162"/>
    </location>
    <ligand>
        <name>[4Fe-4S] cluster</name>
        <dbReference type="ChEBI" id="CHEBI:49883"/>
        <label>4</label>
    </ligand>
</feature>
<proteinExistence type="inferred from homology"/>
<organism>
    <name type="scientific">Haemophilus influenzae (strain ATCC 51907 / DSM 11121 / KW20 / Rd)</name>
    <dbReference type="NCBI Taxonomy" id="71421"/>
    <lineage>
        <taxon>Bacteria</taxon>
        <taxon>Pseudomonadati</taxon>
        <taxon>Pseudomonadota</taxon>
        <taxon>Gammaproteobacteria</taxon>
        <taxon>Pasteurellales</taxon>
        <taxon>Pasteurellaceae</taxon>
        <taxon>Haemophilus</taxon>
    </lineage>
</organism>
<evidence type="ECO:0000255" key="1">
    <source>
        <dbReference type="HAMAP-Rule" id="MF_02201"/>
    </source>
</evidence>
<evidence type="ECO:0000305" key="2"/>
<sequence length="176" mass="19604">MTVENLPRRQFLRGKFSTLSCLENNQKQNFVGIRPPWSVENSIFVARCTRCGDCLSVCETNILVKGDAGFPEVRFDNGECTFCGKCVDACKQPIFYPRDQLPWSHKIDISVSCLTLHRIECRTCQDNCPANAIRFKLQMGGVAQPLVNFDACNGCGACVQGCPVNAITMNDLKQNE</sequence>
<dbReference type="EMBL" id="L42023">
    <property type="protein sequence ID" value="AAC22004.1"/>
    <property type="status" value="ALT_FRAME"/>
    <property type="molecule type" value="Genomic_DNA"/>
</dbReference>
<dbReference type="PIR" id="H64148">
    <property type="entry name" value="H64148"/>
</dbReference>
<dbReference type="STRING" id="71421.HI_0342"/>
<dbReference type="EnsemblBacteria" id="AAC22004">
    <property type="protein sequence ID" value="AAC22004"/>
    <property type="gene ID" value="HI_0342"/>
</dbReference>
<dbReference type="KEGG" id="hin:HI_0342"/>
<dbReference type="eggNOG" id="COG1145">
    <property type="taxonomic scope" value="Bacteria"/>
</dbReference>
<dbReference type="HOGENOM" id="CLU_2176489_0_0_6"/>
<dbReference type="PhylomeDB" id="P44650"/>
<dbReference type="Proteomes" id="UP000000579">
    <property type="component" value="Chromosome"/>
</dbReference>
<dbReference type="GO" id="GO:0005737">
    <property type="term" value="C:cytoplasm"/>
    <property type="evidence" value="ECO:0000318"/>
    <property type="project" value="GO_Central"/>
</dbReference>
<dbReference type="GO" id="GO:0051539">
    <property type="term" value="F:4 iron, 4 sulfur cluster binding"/>
    <property type="evidence" value="ECO:0007669"/>
    <property type="project" value="UniProtKB-UniRule"/>
</dbReference>
<dbReference type="GO" id="GO:0046872">
    <property type="term" value="F:metal ion binding"/>
    <property type="evidence" value="ECO:0007669"/>
    <property type="project" value="UniProtKB-KW"/>
</dbReference>
<dbReference type="CDD" id="cd10564">
    <property type="entry name" value="NapF_like"/>
    <property type="match status" value="1"/>
</dbReference>
<dbReference type="Gene3D" id="3.30.70.20">
    <property type="match status" value="2"/>
</dbReference>
<dbReference type="HAMAP" id="MF_02201">
    <property type="entry name" value="NapF"/>
    <property type="match status" value="1"/>
</dbReference>
<dbReference type="InterPro" id="IPR017896">
    <property type="entry name" value="4Fe4S_Fe-S-bd"/>
</dbReference>
<dbReference type="InterPro" id="IPR017900">
    <property type="entry name" value="4Fe4S_Fe_S_CS"/>
</dbReference>
<dbReference type="InterPro" id="IPR050572">
    <property type="entry name" value="Fe-S_Ferredoxin"/>
</dbReference>
<dbReference type="InterPro" id="IPR004496">
    <property type="entry name" value="NapF"/>
</dbReference>
<dbReference type="NCBIfam" id="TIGR00402">
    <property type="entry name" value="napF"/>
    <property type="match status" value="1"/>
</dbReference>
<dbReference type="PANTHER" id="PTHR43687">
    <property type="entry name" value="ADENYLYLSULFATE REDUCTASE, BETA SUBUNIT"/>
    <property type="match status" value="1"/>
</dbReference>
<dbReference type="PANTHER" id="PTHR43687:SF1">
    <property type="entry name" value="FERREDOXIN III"/>
    <property type="match status" value="1"/>
</dbReference>
<dbReference type="Pfam" id="PF12838">
    <property type="entry name" value="Fer4_7"/>
    <property type="match status" value="2"/>
</dbReference>
<dbReference type="SUPFAM" id="SSF54862">
    <property type="entry name" value="4Fe-4S ferredoxins"/>
    <property type="match status" value="1"/>
</dbReference>
<dbReference type="PROSITE" id="PS00198">
    <property type="entry name" value="4FE4S_FER_1"/>
    <property type="match status" value="2"/>
</dbReference>
<dbReference type="PROSITE" id="PS51379">
    <property type="entry name" value="4FE4S_FER_2"/>
    <property type="match status" value="4"/>
</dbReference>